<comment type="function">
    <text evidence="1 2">Central member of the cytosolic iron-sulfur (Fe-S) protein assembly (CIA) pathway (PubMed:23104832). Involved in leaf polarity formation (PubMed:21070412). Promotes leaf adaxial identity (PubMed:21070412). May play a role in the cell cycle progression and is required for cell proliferation (PubMed:21070412).</text>
</comment>
<comment type="subunit">
    <text evidence="2">Part of a complex formed of AE7, CIA1, MMS19 and NAR1. Interacts with CIA1 and MMS19, but not with NAR1.</text>
</comment>
<comment type="subcellular location">
    <subcellularLocation>
        <location evidence="2">Nucleus</location>
    </subcellularLocation>
    <subcellularLocation>
        <location evidence="2">Cytoplasm</location>
    </subcellularLocation>
</comment>
<comment type="alternative products">
    <event type="alternative splicing"/>
    <isoform>
        <id>Q9C9G6-1</id>
        <name>1</name>
        <sequence type="displayed"/>
    </isoform>
    <isoform>
        <id>Q9C9G6-2</id>
        <name>2</name>
        <sequence type="described" ref="VSP_057802"/>
    </isoform>
</comment>
<comment type="tissue specificity">
    <text evidence="1">Expressed in the embryo, shoot apical meristem, leaf primordia, inflorescence and all floral organs.</text>
</comment>
<comment type="developmental stage">
    <text evidence="1">Expressed throughout the globular-stage, heart-stage and torpedo-stage embryos.</text>
</comment>
<comment type="disruption phenotype">
    <text evidence="2">Embryonic lethality when homozygous.</text>
</comment>
<comment type="similarity">
    <text evidence="4">Belongs to the MIP18 family.</text>
</comment>
<comment type="sequence caution" evidence="4">
    <conflict type="erroneous gene model prediction">
        <sequence resource="EMBL-CDS" id="AAG52613"/>
    </conflict>
</comment>
<gene>
    <name evidence="3" type="primary">AE7</name>
    <name evidence="5" type="ordered locus">At1g68310</name>
    <name evidence="6" type="ORF">T22E19.6</name>
</gene>
<name>AE7_ARATH</name>
<protein>
    <recommendedName>
        <fullName evidence="3">Protein AE7</fullName>
    </recommendedName>
    <alternativeName>
        <fullName evidence="3">AS1/2 enhancer 7</fullName>
    </alternativeName>
    <alternativeName>
        <fullName evidence="3">Asymmetric leaves 1/2 enhancer 7</fullName>
    </alternativeName>
</protein>
<sequence length="157" mass="17835">MVSGLINENPIIYPKKERRLRTDTSITDELTPEPIDQLEIFDHIRDIKDPEHPNTLEDLRVVTEDSVEVDDENSYVRVTFTPTVEHCSMATVIGLCVRVKLLRSLPSRYKIDIRVAPGSHATEDALNKQLNDKERVAAALENPNLVEMVDECLPSEE</sequence>
<organism>
    <name type="scientific">Arabidopsis thaliana</name>
    <name type="common">Mouse-ear cress</name>
    <dbReference type="NCBI Taxonomy" id="3702"/>
    <lineage>
        <taxon>Eukaryota</taxon>
        <taxon>Viridiplantae</taxon>
        <taxon>Streptophyta</taxon>
        <taxon>Embryophyta</taxon>
        <taxon>Tracheophyta</taxon>
        <taxon>Spermatophyta</taxon>
        <taxon>Magnoliopsida</taxon>
        <taxon>eudicotyledons</taxon>
        <taxon>Gunneridae</taxon>
        <taxon>Pentapetalae</taxon>
        <taxon>rosids</taxon>
        <taxon>malvids</taxon>
        <taxon>Brassicales</taxon>
        <taxon>Brassicaceae</taxon>
        <taxon>Camelineae</taxon>
        <taxon>Arabidopsis</taxon>
    </lineage>
</organism>
<accession>Q9C9G6</accession>
<accession>F4HX83</accession>
<accession>Q84JZ3</accession>
<proteinExistence type="evidence at protein level"/>
<keyword id="KW-0025">Alternative splicing</keyword>
<keyword id="KW-0159">Chromosome partition</keyword>
<keyword id="KW-0963">Cytoplasm</keyword>
<keyword id="KW-0539">Nucleus</keyword>
<keyword id="KW-1185">Reference proteome</keyword>
<reference key="1">
    <citation type="journal article" date="2000" name="Nature">
        <title>Sequence and analysis of chromosome 1 of the plant Arabidopsis thaliana.</title>
        <authorList>
            <person name="Theologis A."/>
            <person name="Ecker J.R."/>
            <person name="Palm C.J."/>
            <person name="Federspiel N.A."/>
            <person name="Kaul S."/>
            <person name="White O."/>
            <person name="Alonso J."/>
            <person name="Altafi H."/>
            <person name="Araujo R."/>
            <person name="Bowman C.L."/>
            <person name="Brooks S.Y."/>
            <person name="Buehler E."/>
            <person name="Chan A."/>
            <person name="Chao Q."/>
            <person name="Chen H."/>
            <person name="Cheuk R.F."/>
            <person name="Chin C.W."/>
            <person name="Chung M.K."/>
            <person name="Conn L."/>
            <person name="Conway A.B."/>
            <person name="Conway A.R."/>
            <person name="Creasy T.H."/>
            <person name="Dewar K."/>
            <person name="Dunn P."/>
            <person name="Etgu P."/>
            <person name="Feldblyum T.V."/>
            <person name="Feng J.-D."/>
            <person name="Fong B."/>
            <person name="Fujii C.Y."/>
            <person name="Gill J.E."/>
            <person name="Goldsmith A.D."/>
            <person name="Haas B."/>
            <person name="Hansen N.F."/>
            <person name="Hughes B."/>
            <person name="Huizar L."/>
            <person name="Hunter J.L."/>
            <person name="Jenkins J."/>
            <person name="Johnson-Hopson C."/>
            <person name="Khan S."/>
            <person name="Khaykin E."/>
            <person name="Kim C.J."/>
            <person name="Koo H.L."/>
            <person name="Kremenetskaia I."/>
            <person name="Kurtz D.B."/>
            <person name="Kwan A."/>
            <person name="Lam B."/>
            <person name="Langin-Hooper S."/>
            <person name="Lee A."/>
            <person name="Lee J.M."/>
            <person name="Lenz C.A."/>
            <person name="Li J.H."/>
            <person name="Li Y.-P."/>
            <person name="Lin X."/>
            <person name="Liu S.X."/>
            <person name="Liu Z.A."/>
            <person name="Luros J.S."/>
            <person name="Maiti R."/>
            <person name="Marziali A."/>
            <person name="Militscher J."/>
            <person name="Miranda M."/>
            <person name="Nguyen M."/>
            <person name="Nierman W.C."/>
            <person name="Osborne B.I."/>
            <person name="Pai G."/>
            <person name="Peterson J."/>
            <person name="Pham P.K."/>
            <person name="Rizzo M."/>
            <person name="Rooney T."/>
            <person name="Rowley D."/>
            <person name="Sakano H."/>
            <person name="Salzberg S.L."/>
            <person name="Schwartz J.R."/>
            <person name="Shinn P."/>
            <person name="Southwick A.M."/>
            <person name="Sun H."/>
            <person name="Tallon L.J."/>
            <person name="Tambunga G."/>
            <person name="Toriumi M.J."/>
            <person name="Town C.D."/>
            <person name="Utterback T."/>
            <person name="Van Aken S."/>
            <person name="Vaysberg M."/>
            <person name="Vysotskaia V.S."/>
            <person name="Walker M."/>
            <person name="Wu D."/>
            <person name="Yu G."/>
            <person name="Fraser C.M."/>
            <person name="Venter J.C."/>
            <person name="Davis R.W."/>
        </authorList>
    </citation>
    <scope>NUCLEOTIDE SEQUENCE [LARGE SCALE GENOMIC DNA]</scope>
    <source>
        <strain>cv. Columbia</strain>
    </source>
</reference>
<reference key="2">
    <citation type="journal article" date="2017" name="Plant J.">
        <title>Araport11: a complete reannotation of the Arabidopsis thaliana reference genome.</title>
        <authorList>
            <person name="Cheng C.Y."/>
            <person name="Krishnakumar V."/>
            <person name="Chan A.P."/>
            <person name="Thibaud-Nissen F."/>
            <person name="Schobel S."/>
            <person name="Town C.D."/>
        </authorList>
    </citation>
    <scope>GENOME REANNOTATION</scope>
    <source>
        <strain>cv. Columbia</strain>
    </source>
</reference>
<reference key="3">
    <citation type="journal article" date="2003" name="Science">
        <title>Empirical analysis of transcriptional activity in the Arabidopsis genome.</title>
        <authorList>
            <person name="Yamada K."/>
            <person name="Lim J."/>
            <person name="Dale J.M."/>
            <person name="Chen H."/>
            <person name="Shinn P."/>
            <person name="Palm C.J."/>
            <person name="Southwick A.M."/>
            <person name="Wu H.C."/>
            <person name="Kim C.J."/>
            <person name="Nguyen M."/>
            <person name="Pham P.K."/>
            <person name="Cheuk R.F."/>
            <person name="Karlin-Newmann G."/>
            <person name="Liu S.X."/>
            <person name="Lam B."/>
            <person name="Sakano H."/>
            <person name="Wu T."/>
            <person name="Yu G."/>
            <person name="Miranda M."/>
            <person name="Quach H.L."/>
            <person name="Tripp M."/>
            <person name="Chang C.H."/>
            <person name="Lee J.M."/>
            <person name="Toriumi M.J."/>
            <person name="Chan M.M."/>
            <person name="Tang C.C."/>
            <person name="Onodera C.S."/>
            <person name="Deng J.M."/>
            <person name="Akiyama K."/>
            <person name="Ansari Y."/>
            <person name="Arakawa T."/>
            <person name="Banh J."/>
            <person name="Banno F."/>
            <person name="Bowser L."/>
            <person name="Brooks S.Y."/>
            <person name="Carninci P."/>
            <person name="Chao Q."/>
            <person name="Choy N."/>
            <person name="Enju A."/>
            <person name="Goldsmith A.D."/>
            <person name="Gurjal M."/>
            <person name="Hansen N.F."/>
            <person name="Hayashizaki Y."/>
            <person name="Johnson-Hopson C."/>
            <person name="Hsuan V.W."/>
            <person name="Iida K."/>
            <person name="Karnes M."/>
            <person name="Khan S."/>
            <person name="Koesema E."/>
            <person name="Ishida J."/>
            <person name="Jiang P.X."/>
            <person name="Jones T."/>
            <person name="Kawai J."/>
            <person name="Kamiya A."/>
            <person name="Meyers C."/>
            <person name="Nakajima M."/>
            <person name="Narusaka M."/>
            <person name="Seki M."/>
            <person name="Sakurai T."/>
            <person name="Satou M."/>
            <person name="Tamse R."/>
            <person name="Vaysberg M."/>
            <person name="Wallender E.K."/>
            <person name="Wong C."/>
            <person name="Yamamura Y."/>
            <person name="Yuan S."/>
            <person name="Shinozaki K."/>
            <person name="Davis R.W."/>
            <person name="Theologis A."/>
            <person name="Ecker J.R."/>
        </authorList>
    </citation>
    <scope>NUCLEOTIDE SEQUENCE [LARGE SCALE MRNA] (ISOFORM 1)</scope>
    <source>
        <strain>cv. Columbia</strain>
    </source>
</reference>
<reference key="4">
    <citation type="submission" date="2006-07" db="EMBL/GenBank/DDBJ databases">
        <title>Large-scale analysis of RIKEN Arabidopsis full-length (RAFL) cDNAs.</title>
        <authorList>
            <person name="Totoki Y."/>
            <person name="Seki M."/>
            <person name="Ishida J."/>
            <person name="Nakajima M."/>
            <person name="Enju A."/>
            <person name="Kamiya A."/>
            <person name="Narusaka M."/>
            <person name="Shin-i T."/>
            <person name="Nakagawa M."/>
            <person name="Sakamoto N."/>
            <person name="Oishi K."/>
            <person name="Kohara Y."/>
            <person name="Kobayashi M."/>
            <person name="Toyoda A."/>
            <person name="Sakaki Y."/>
            <person name="Sakurai T."/>
            <person name="Iida K."/>
            <person name="Akiyama K."/>
            <person name="Satou M."/>
            <person name="Toyoda T."/>
            <person name="Konagaya A."/>
            <person name="Carninci P."/>
            <person name="Kawai J."/>
            <person name="Hayashizaki Y."/>
            <person name="Shinozaki K."/>
        </authorList>
    </citation>
    <scope>NUCLEOTIDE SEQUENCE [LARGE SCALE MRNA] (ISOFORM 1)</scope>
    <source>
        <strain>cv. Columbia</strain>
    </source>
</reference>
<reference key="5">
    <citation type="journal article" date="2009" name="DNA Res.">
        <title>Analysis of multiple occurrences of alternative splicing events in Arabidopsis thaliana using novel sequenced full-length cDNAs.</title>
        <authorList>
            <person name="Iida K."/>
            <person name="Fukami-Kobayashi K."/>
            <person name="Toyoda A."/>
            <person name="Sakaki Y."/>
            <person name="Kobayashi M."/>
            <person name="Seki M."/>
            <person name="Shinozaki K."/>
        </authorList>
    </citation>
    <scope>NUCLEOTIDE SEQUENCE [LARGE SCALE MRNA] (ISOFORM 1)</scope>
    <source>
        <strain>cv. Columbia</strain>
    </source>
</reference>
<reference key="6">
    <citation type="journal article" date="2010" name="Plant J.">
        <title>Characterization of the AE7 gene in Arabidopsis suggests that normal cell proliferation is essential for leaf polarity establishment.</title>
        <authorList>
            <person name="Yuan Z."/>
            <person name="Luo D."/>
            <person name="Li G."/>
            <person name="Yao X."/>
            <person name="Wang H."/>
            <person name="Zeng M."/>
            <person name="Huang H."/>
            <person name="Cui X."/>
        </authorList>
    </citation>
    <scope>FUNCTION</scope>
    <scope>TISSUE SPECIFICITY</scope>
    <scope>DEVELOPMENTAL STAGE</scope>
    <scope>MUTAGENESIS OF GLU-51</scope>
    <source>
        <strain>cv. Landsberg erecta</strain>
    </source>
</reference>
<reference key="7">
    <citation type="journal article" date="2012" name="Plant Cell">
        <title>The DUF59 family gene AE7 acts in the cytosolic iron-sulfur cluster assembly pathway to maintain nuclear genome integrity in Arabidopsis.</title>
        <authorList>
            <person name="Luo D."/>
            <person name="Bernard D.G."/>
            <person name="Balk J."/>
            <person name="Hai H."/>
            <person name="Cui X."/>
        </authorList>
    </citation>
    <scope>FUNCTION</scope>
    <scope>MUTAGENESIS OF GLU-51</scope>
    <scope>INTERACTION WITH CIA1; MMS19 AND NAR1</scope>
    <scope>SUBCELLULAR LOCATION</scope>
    <scope>DISRUPTION PHENOTYPE</scope>
    <source>
        <strain>cv. Columbia</strain>
    </source>
</reference>
<feature type="chain" id="PRO_0000212696" description="Protein AE7">
    <location>
        <begin position="1"/>
        <end position="157"/>
    </location>
</feature>
<feature type="splice variant" id="VSP_057802" description="In isoform 2.">
    <original>HIRD</original>
    <variation>ILSSSN</variation>
    <location>
        <begin position="43"/>
        <end position="46"/>
    </location>
</feature>
<feature type="mutagenesis site" description="In ae7-1; leaf adaxial-abaxial polarity defects, highly accumulated DNA damage and activation of the DNA damage response." evidence="1 2">
    <original>E</original>
    <variation>K</variation>
    <location>
        <position position="51"/>
    </location>
</feature>
<dbReference type="EMBL" id="AC016447">
    <property type="protein sequence ID" value="AAG52613.1"/>
    <property type="status" value="ALT_SEQ"/>
    <property type="molecule type" value="Genomic_DNA"/>
</dbReference>
<dbReference type="EMBL" id="CP002684">
    <property type="protein sequence ID" value="AEE34779.1"/>
    <property type="molecule type" value="Genomic_DNA"/>
</dbReference>
<dbReference type="EMBL" id="CP002684">
    <property type="protein sequence ID" value="AEE34780.1"/>
    <property type="molecule type" value="Genomic_DNA"/>
</dbReference>
<dbReference type="EMBL" id="BT005787">
    <property type="protein sequence ID" value="AAO64190.1"/>
    <property type="molecule type" value="mRNA"/>
</dbReference>
<dbReference type="EMBL" id="BT006073">
    <property type="protein sequence ID" value="AAP04058.1"/>
    <property type="molecule type" value="mRNA"/>
</dbReference>
<dbReference type="EMBL" id="AK228380">
    <property type="protein sequence ID" value="BAF00318.1"/>
    <property type="molecule type" value="mRNA"/>
</dbReference>
<dbReference type="EMBL" id="AK319096">
    <property type="protein sequence ID" value="BAH57211.1"/>
    <property type="molecule type" value="mRNA"/>
</dbReference>
<dbReference type="PIR" id="G96706">
    <property type="entry name" value="G96706"/>
</dbReference>
<dbReference type="RefSeq" id="NP_001154457.1">
    <molecule id="Q9C9G6-1"/>
    <property type="nucleotide sequence ID" value="NM_001160985.2"/>
</dbReference>
<dbReference type="RefSeq" id="NP_176998.1">
    <molecule id="Q9C9G6-2"/>
    <property type="nucleotide sequence ID" value="NM_105502.2"/>
</dbReference>
<dbReference type="SMR" id="Q9C9G6"/>
<dbReference type="BioGRID" id="28381">
    <property type="interactions" value="1"/>
</dbReference>
<dbReference type="FunCoup" id="Q9C9G6">
    <property type="interactions" value="3523"/>
</dbReference>
<dbReference type="STRING" id="3702.Q9C9G6"/>
<dbReference type="iPTMnet" id="Q9C9G6"/>
<dbReference type="PaxDb" id="3702-AT1G68310.1"/>
<dbReference type="ProteomicsDB" id="244726">
    <molecule id="Q9C9G6-1"/>
</dbReference>
<dbReference type="EnsemblPlants" id="AT1G68310.1">
    <molecule id="Q9C9G6-2"/>
    <property type="protein sequence ID" value="AT1G68310.1"/>
    <property type="gene ID" value="AT1G68310"/>
</dbReference>
<dbReference type="EnsemblPlants" id="AT1G68310.2">
    <molecule id="Q9C9G6-1"/>
    <property type="protein sequence ID" value="AT1G68310.2"/>
    <property type="gene ID" value="AT1G68310"/>
</dbReference>
<dbReference type="GeneID" id="843160"/>
<dbReference type="Gramene" id="AT1G68310.1">
    <molecule id="Q9C9G6-2"/>
    <property type="protein sequence ID" value="AT1G68310.1"/>
    <property type="gene ID" value="AT1G68310"/>
</dbReference>
<dbReference type="Gramene" id="AT1G68310.2">
    <molecule id="Q9C9G6-1"/>
    <property type="protein sequence ID" value="AT1G68310.2"/>
    <property type="gene ID" value="AT1G68310"/>
</dbReference>
<dbReference type="KEGG" id="ath:AT1G68310"/>
<dbReference type="Araport" id="AT1G68310"/>
<dbReference type="TAIR" id="AT1G68310">
    <property type="gene designation" value="AE7"/>
</dbReference>
<dbReference type="eggNOG" id="KOG3381">
    <property type="taxonomic scope" value="Eukaryota"/>
</dbReference>
<dbReference type="HOGENOM" id="CLU_075876_3_0_1"/>
<dbReference type="InParanoid" id="Q9C9G6"/>
<dbReference type="OMA" id="IRCCWAR"/>
<dbReference type="OrthoDB" id="2746at2759"/>
<dbReference type="PhylomeDB" id="Q9C9G6"/>
<dbReference type="PRO" id="PR:Q9C9G6"/>
<dbReference type="Proteomes" id="UP000006548">
    <property type="component" value="Chromosome 1"/>
</dbReference>
<dbReference type="ExpressionAtlas" id="Q9C9G6">
    <property type="expression patterns" value="baseline and differential"/>
</dbReference>
<dbReference type="GO" id="GO:0005737">
    <property type="term" value="C:cytoplasm"/>
    <property type="evidence" value="ECO:0007669"/>
    <property type="project" value="UniProtKB-SubCell"/>
</dbReference>
<dbReference type="GO" id="GO:0005634">
    <property type="term" value="C:nucleus"/>
    <property type="evidence" value="ECO:0007669"/>
    <property type="project" value="UniProtKB-SubCell"/>
</dbReference>
<dbReference type="GO" id="GO:0010209">
    <property type="term" value="F:vacuolar sorting signal binding"/>
    <property type="evidence" value="ECO:0000314"/>
    <property type="project" value="TAIR"/>
</dbReference>
<dbReference type="GO" id="GO:0007059">
    <property type="term" value="P:chromosome segregation"/>
    <property type="evidence" value="ECO:0007669"/>
    <property type="project" value="UniProtKB-KW"/>
</dbReference>
<dbReference type="GO" id="GO:0006259">
    <property type="term" value="P:DNA metabolic process"/>
    <property type="evidence" value="ECO:0000315"/>
    <property type="project" value="TAIR"/>
</dbReference>
<dbReference type="GO" id="GO:1990067">
    <property type="term" value="P:intrachromosomal DNA recombination"/>
    <property type="evidence" value="ECO:0000315"/>
    <property type="project" value="TAIR"/>
</dbReference>
<dbReference type="GO" id="GO:0016226">
    <property type="term" value="P:iron-sulfur cluster assembly"/>
    <property type="evidence" value="ECO:0000315"/>
    <property type="project" value="TAIR"/>
</dbReference>
<dbReference type="GO" id="GO:0009944">
    <property type="term" value="P:polarity specification of adaxial/abaxial axis"/>
    <property type="evidence" value="ECO:0000315"/>
    <property type="project" value="TAIR"/>
</dbReference>
<dbReference type="GO" id="GO:0051604">
    <property type="term" value="P:protein maturation"/>
    <property type="evidence" value="ECO:0007669"/>
    <property type="project" value="InterPro"/>
</dbReference>
<dbReference type="GO" id="GO:0051726">
    <property type="term" value="P:regulation of cell cycle"/>
    <property type="evidence" value="ECO:0000315"/>
    <property type="project" value="TAIR"/>
</dbReference>
<dbReference type="GO" id="GO:0042127">
    <property type="term" value="P:regulation of cell population proliferation"/>
    <property type="evidence" value="ECO:0000315"/>
    <property type="project" value="TAIR"/>
</dbReference>
<dbReference type="FunFam" id="3.30.300.130:FF:000010">
    <property type="entry name" value="Protein AE7-like 1"/>
    <property type="match status" value="1"/>
</dbReference>
<dbReference type="Gene3D" id="6.10.250.1280">
    <property type="match status" value="1"/>
</dbReference>
<dbReference type="Gene3D" id="3.30.300.130">
    <property type="entry name" value="Fe-S cluster assembly (FSCA)"/>
    <property type="match status" value="1"/>
</dbReference>
<dbReference type="InterPro" id="IPR034904">
    <property type="entry name" value="FSCA_dom_sf"/>
</dbReference>
<dbReference type="InterPro" id="IPR039796">
    <property type="entry name" value="MIP18"/>
</dbReference>
<dbReference type="InterPro" id="IPR002744">
    <property type="entry name" value="MIP18-like"/>
</dbReference>
<dbReference type="PANTHER" id="PTHR12377:SF0">
    <property type="entry name" value="CYTOSOLIC IRON-SULFUR ASSEMBLY COMPONENT 2B"/>
    <property type="match status" value="1"/>
</dbReference>
<dbReference type="PANTHER" id="PTHR12377">
    <property type="entry name" value="CYTOSOLIC IRON-SULFUR ASSEMBLY COMPONENT 2B-RELATED"/>
    <property type="match status" value="1"/>
</dbReference>
<dbReference type="Pfam" id="PF01883">
    <property type="entry name" value="FeS_assembly_P"/>
    <property type="match status" value="1"/>
</dbReference>
<dbReference type="SUPFAM" id="SSF117916">
    <property type="entry name" value="Fe-S cluster assembly (FSCA) domain-like"/>
    <property type="match status" value="1"/>
</dbReference>
<evidence type="ECO:0000269" key="1">
    <source>
    </source>
</evidence>
<evidence type="ECO:0000269" key="2">
    <source>
    </source>
</evidence>
<evidence type="ECO:0000303" key="3">
    <source>
    </source>
</evidence>
<evidence type="ECO:0000305" key="4"/>
<evidence type="ECO:0000312" key="5">
    <source>
        <dbReference type="Araport" id="AT1G68310"/>
    </source>
</evidence>
<evidence type="ECO:0000312" key="6">
    <source>
        <dbReference type="EMBL" id="AAG52613.1"/>
    </source>
</evidence>